<protein>
    <recommendedName>
        <fullName evidence="1">tRNA-specific 2-thiouridylase MnmA</fullName>
        <ecNumber evidence="1">2.8.1.13</ecNumber>
    </recommendedName>
</protein>
<dbReference type="EC" id="2.8.1.13" evidence="1"/>
<dbReference type="EMBL" id="CP001601">
    <property type="protein sequence ID" value="ACP32691.1"/>
    <property type="molecule type" value="Genomic_DNA"/>
</dbReference>
<dbReference type="RefSeq" id="WP_010187009.1">
    <property type="nucleotide sequence ID" value="NC_012590.1"/>
</dbReference>
<dbReference type="SMR" id="C3PFT7"/>
<dbReference type="STRING" id="548476.cauri_1096"/>
<dbReference type="GeneID" id="31923717"/>
<dbReference type="KEGG" id="car:cauri_1096"/>
<dbReference type="eggNOG" id="COG0482">
    <property type="taxonomic scope" value="Bacteria"/>
</dbReference>
<dbReference type="HOGENOM" id="CLU_035188_0_2_11"/>
<dbReference type="OrthoDB" id="9800696at2"/>
<dbReference type="Proteomes" id="UP000002077">
    <property type="component" value="Chromosome"/>
</dbReference>
<dbReference type="GO" id="GO:0005737">
    <property type="term" value="C:cytoplasm"/>
    <property type="evidence" value="ECO:0007669"/>
    <property type="project" value="UniProtKB-SubCell"/>
</dbReference>
<dbReference type="GO" id="GO:0005524">
    <property type="term" value="F:ATP binding"/>
    <property type="evidence" value="ECO:0007669"/>
    <property type="project" value="UniProtKB-KW"/>
</dbReference>
<dbReference type="GO" id="GO:0000049">
    <property type="term" value="F:tRNA binding"/>
    <property type="evidence" value="ECO:0007669"/>
    <property type="project" value="UniProtKB-KW"/>
</dbReference>
<dbReference type="GO" id="GO:0103016">
    <property type="term" value="F:tRNA-uridine 2-sulfurtransferase activity"/>
    <property type="evidence" value="ECO:0007669"/>
    <property type="project" value="UniProtKB-EC"/>
</dbReference>
<dbReference type="GO" id="GO:0002143">
    <property type="term" value="P:tRNA wobble position uridine thiolation"/>
    <property type="evidence" value="ECO:0007669"/>
    <property type="project" value="TreeGrafter"/>
</dbReference>
<dbReference type="CDD" id="cd01998">
    <property type="entry name" value="MnmA_TRMU-like"/>
    <property type="match status" value="1"/>
</dbReference>
<dbReference type="FunFam" id="2.30.30.280:FF:000001">
    <property type="entry name" value="tRNA-specific 2-thiouridylase MnmA"/>
    <property type="match status" value="1"/>
</dbReference>
<dbReference type="FunFam" id="3.40.50.620:FF:000057">
    <property type="entry name" value="tRNA-specific 2-thiouridylase MnmA"/>
    <property type="match status" value="1"/>
</dbReference>
<dbReference type="Gene3D" id="2.30.30.280">
    <property type="entry name" value="Adenine nucleotide alpha hydrolases-like domains"/>
    <property type="match status" value="1"/>
</dbReference>
<dbReference type="Gene3D" id="3.40.50.620">
    <property type="entry name" value="HUPs"/>
    <property type="match status" value="1"/>
</dbReference>
<dbReference type="Gene3D" id="2.40.30.10">
    <property type="entry name" value="Translation factors"/>
    <property type="match status" value="1"/>
</dbReference>
<dbReference type="HAMAP" id="MF_00144">
    <property type="entry name" value="tRNA_thiouridyl_MnmA"/>
    <property type="match status" value="1"/>
</dbReference>
<dbReference type="InterPro" id="IPR004506">
    <property type="entry name" value="MnmA-like"/>
</dbReference>
<dbReference type="InterPro" id="IPR046885">
    <property type="entry name" value="MnmA-like_C"/>
</dbReference>
<dbReference type="InterPro" id="IPR046884">
    <property type="entry name" value="MnmA-like_central"/>
</dbReference>
<dbReference type="InterPro" id="IPR023382">
    <property type="entry name" value="MnmA-like_central_sf"/>
</dbReference>
<dbReference type="InterPro" id="IPR014729">
    <property type="entry name" value="Rossmann-like_a/b/a_fold"/>
</dbReference>
<dbReference type="NCBIfam" id="NF001138">
    <property type="entry name" value="PRK00143.1"/>
    <property type="match status" value="1"/>
</dbReference>
<dbReference type="NCBIfam" id="TIGR00420">
    <property type="entry name" value="trmU"/>
    <property type="match status" value="1"/>
</dbReference>
<dbReference type="PANTHER" id="PTHR11933:SF5">
    <property type="entry name" value="MITOCHONDRIAL TRNA-SPECIFIC 2-THIOURIDYLASE 1"/>
    <property type="match status" value="1"/>
</dbReference>
<dbReference type="PANTHER" id="PTHR11933">
    <property type="entry name" value="TRNA 5-METHYLAMINOMETHYL-2-THIOURIDYLATE -METHYLTRANSFERASE"/>
    <property type="match status" value="1"/>
</dbReference>
<dbReference type="Pfam" id="PF03054">
    <property type="entry name" value="tRNA_Me_trans"/>
    <property type="match status" value="1"/>
</dbReference>
<dbReference type="Pfam" id="PF20258">
    <property type="entry name" value="tRNA_Me_trans_C"/>
    <property type="match status" value="1"/>
</dbReference>
<dbReference type="Pfam" id="PF20259">
    <property type="entry name" value="tRNA_Me_trans_M"/>
    <property type="match status" value="1"/>
</dbReference>
<dbReference type="SUPFAM" id="SSF52402">
    <property type="entry name" value="Adenine nucleotide alpha hydrolases-like"/>
    <property type="match status" value="1"/>
</dbReference>
<accession>C3PFT7</accession>
<organism>
    <name type="scientific">Corynebacterium aurimucosum (strain ATCC 700975 / DSM 44827 / CIP 107346 / CN-1)</name>
    <name type="common">Corynebacterium nigricans</name>
    <dbReference type="NCBI Taxonomy" id="548476"/>
    <lineage>
        <taxon>Bacteria</taxon>
        <taxon>Bacillati</taxon>
        <taxon>Actinomycetota</taxon>
        <taxon>Actinomycetes</taxon>
        <taxon>Mycobacteriales</taxon>
        <taxon>Corynebacteriaceae</taxon>
        <taxon>Corynebacterium</taxon>
    </lineage>
</organism>
<gene>
    <name evidence="1" type="primary">mnmA</name>
    <name type="ordered locus">cauri_1096</name>
</gene>
<feature type="chain" id="PRO_1000198607" description="tRNA-specific 2-thiouridylase MnmA">
    <location>
        <begin position="1"/>
        <end position="361"/>
    </location>
</feature>
<feature type="region of interest" description="Interaction with tRNA" evidence="1">
    <location>
        <begin position="144"/>
        <end position="146"/>
    </location>
</feature>
<feature type="active site" description="Nucleophile" evidence="1">
    <location>
        <position position="101"/>
    </location>
</feature>
<feature type="active site" description="Cysteine persulfide intermediate" evidence="1">
    <location>
        <position position="194"/>
    </location>
</feature>
<feature type="binding site" evidence="1">
    <location>
        <begin position="6"/>
        <end position="13"/>
    </location>
    <ligand>
        <name>ATP</name>
        <dbReference type="ChEBI" id="CHEBI:30616"/>
    </ligand>
</feature>
<feature type="binding site" evidence="1">
    <location>
        <position position="32"/>
    </location>
    <ligand>
        <name>ATP</name>
        <dbReference type="ChEBI" id="CHEBI:30616"/>
    </ligand>
</feature>
<feature type="binding site" evidence="1">
    <location>
        <position position="125"/>
    </location>
    <ligand>
        <name>ATP</name>
        <dbReference type="ChEBI" id="CHEBI:30616"/>
    </ligand>
</feature>
<feature type="site" description="Interaction with tRNA" evidence="1">
    <location>
        <position position="126"/>
    </location>
</feature>
<feature type="site" description="Interaction with tRNA" evidence="1">
    <location>
        <position position="335"/>
    </location>
</feature>
<feature type="disulfide bond" description="Alternate" evidence="1">
    <location>
        <begin position="101"/>
        <end position="194"/>
    </location>
</feature>
<reference key="1">
    <citation type="journal article" date="2010" name="BMC Genomics">
        <title>Complete genome sequence and lifestyle of black-pigmented Corynebacterium aurimucosum ATCC 700975 (formerly C. nigricans CN-1) isolated from a vaginal swab of a woman with spontaneous abortion.</title>
        <authorList>
            <person name="Trost E."/>
            <person name="Gotker S."/>
            <person name="Schneider J."/>
            <person name="Schneiker-Bekel S."/>
            <person name="Szczepanowski R."/>
            <person name="Tilker A."/>
            <person name="Viehoever P."/>
            <person name="Arnold W."/>
            <person name="Bekel T."/>
            <person name="Blom J."/>
            <person name="Gartemann K.H."/>
            <person name="Linke B."/>
            <person name="Goesmann A."/>
            <person name="Puhler A."/>
            <person name="Shukla S.K."/>
            <person name="Tauch A."/>
        </authorList>
    </citation>
    <scope>NUCLEOTIDE SEQUENCE [LARGE SCALE GENOMIC DNA]</scope>
    <source>
        <strain>ATCC 700975 / DSM 44827 / CIP 107346 / CN-1</strain>
    </source>
</reference>
<keyword id="KW-0067">ATP-binding</keyword>
<keyword id="KW-0963">Cytoplasm</keyword>
<keyword id="KW-1015">Disulfide bond</keyword>
<keyword id="KW-0547">Nucleotide-binding</keyword>
<keyword id="KW-1185">Reference proteome</keyword>
<keyword id="KW-0694">RNA-binding</keyword>
<keyword id="KW-0808">Transferase</keyword>
<keyword id="KW-0819">tRNA processing</keyword>
<keyword id="KW-0820">tRNA-binding</keyword>
<sequence>MRVLVAMSGGVDSSVAAARAVEAGHDVIGVHLALHKDAQQTREKARGCCSLEDSADARRICDKLGIPFYVWDFSEEFKEAVIGDFVDSYARGETPNPCLRCNEKIKFAALLRKGMALGFDAVATGHYATIDSDGYMRRSLDENKDQSYVLGVITKEELDHCFFPIGDTPKPQIREEAKRHGFSTAAKPDSYDICFIPDGNTQAFLGRSIGLRPGMIVDTEGNELKEHDGAWNYTIGQRKGLDIKTPTADGSPRYVTDIDAATGTVTVGSRADLAVTHIEADRLKYLHPAMEGDFDCEVQVRAHGSVVPCHAHVDREADRMTLELNEPLSGVARGQAAVLYLPSPDELGDIVLGSGTICGTE</sequence>
<evidence type="ECO:0000255" key="1">
    <source>
        <dbReference type="HAMAP-Rule" id="MF_00144"/>
    </source>
</evidence>
<comment type="function">
    <text evidence="1">Catalyzes the 2-thiolation of uridine at the wobble position (U34) of tRNA, leading to the formation of s(2)U34.</text>
</comment>
<comment type="catalytic activity">
    <reaction evidence="1">
        <text>S-sulfanyl-L-cysteinyl-[protein] + uridine(34) in tRNA + AH2 + ATP = 2-thiouridine(34) in tRNA + L-cysteinyl-[protein] + A + AMP + diphosphate + H(+)</text>
        <dbReference type="Rhea" id="RHEA:47032"/>
        <dbReference type="Rhea" id="RHEA-COMP:10131"/>
        <dbReference type="Rhea" id="RHEA-COMP:11726"/>
        <dbReference type="Rhea" id="RHEA-COMP:11727"/>
        <dbReference type="Rhea" id="RHEA-COMP:11728"/>
        <dbReference type="ChEBI" id="CHEBI:13193"/>
        <dbReference type="ChEBI" id="CHEBI:15378"/>
        <dbReference type="ChEBI" id="CHEBI:17499"/>
        <dbReference type="ChEBI" id="CHEBI:29950"/>
        <dbReference type="ChEBI" id="CHEBI:30616"/>
        <dbReference type="ChEBI" id="CHEBI:33019"/>
        <dbReference type="ChEBI" id="CHEBI:61963"/>
        <dbReference type="ChEBI" id="CHEBI:65315"/>
        <dbReference type="ChEBI" id="CHEBI:87170"/>
        <dbReference type="ChEBI" id="CHEBI:456215"/>
        <dbReference type="EC" id="2.8.1.13"/>
    </reaction>
</comment>
<comment type="subcellular location">
    <subcellularLocation>
        <location evidence="1">Cytoplasm</location>
    </subcellularLocation>
</comment>
<comment type="similarity">
    <text evidence="1">Belongs to the MnmA/TRMU family.</text>
</comment>
<name>MNMA_CORA7</name>
<proteinExistence type="inferred from homology"/>